<accession>Q5EB28</accession>
<gene>
    <name type="primary">midn</name>
    <name type="ORF">TNeu058f14.1</name>
</gene>
<protein>
    <recommendedName>
        <fullName>Midnolin</fullName>
    </recommendedName>
    <alternativeName>
        <fullName>Midbrain nucleolar protein</fullName>
    </alternativeName>
</protein>
<feature type="chain" id="PRO_0000287541" description="Midnolin">
    <location>
        <begin position="1"/>
        <end position="453"/>
    </location>
</feature>
<feature type="domain" description="Ubiquitin-like" evidence="3">
    <location>
        <begin position="20"/>
        <end position="94"/>
    </location>
</feature>
<feature type="region of interest" description="Disordered" evidence="4">
    <location>
        <begin position="185"/>
        <end position="219"/>
    </location>
</feature>
<feature type="region of interest" description="Disordered" evidence="4">
    <location>
        <begin position="231"/>
        <end position="256"/>
    </location>
</feature>
<feature type="region of interest" description="Disordered" evidence="4">
    <location>
        <begin position="330"/>
        <end position="374"/>
    </location>
</feature>
<feature type="region of interest" description="Disordered" evidence="4">
    <location>
        <begin position="390"/>
        <end position="434"/>
    </location>
</feature>
<feature type="compositionally biased region" description="Low complexity" evidence="4">
    <location>
        <begin position="188"/>
        <end position="204"/>
    </location>
</feature>
<feature type="compositionally biased region" description="Low complexity" evidence="4">
    <location>
        <begin position="239"/>
        <end position="252"/>
    </location>
</feature>
<feature type="compositionally biased region" description="Polar residues" evidence="4">
    <location>
        <begin position="330"/>
        <end position="362"/>
    </location>
</feature>
<feature type="compositionally biased region" description="Basic and acidic residues" evidence="4">
    <location>
        <begin position="365"/>
        <end position="374"/>
    </location>
</feature>
<feature type="compositionally biased region" description="Basic residues" evidence="4">
    <location>
        <begin position="390"/>
        <end position="399"/>
    </location>
</feature>
<feature type="compositionally biased region" description="Low complexity" evidence="4">
    <location>
        <begin position="415"/>
        <end position="428"/>
    </location>
</feature>
<name>MIDN_XENTR</name>
<keyword id="KW-0963">Cytoplasm</keyword>
<keyword id="KW-0539">Nucleus</keyword>
<keyword id="KW-1185">Reference proteome</keyword>
<comment type="function">
    <text evidence="1 2">Facilitates ubiquitin-independent proteasomal degradation of polycomb protein CBX4. Plays a role in inhibiting the activity of glucokinase GCK and both glucose-induced and basal insulin secretion.</text>
</comment>
<comment type="subcellular location">
    <subcellularLocation>
        <location evidence="2">Nucleus</location>
    </subcellularLocation>
    <subcellularLocation>
        <location evidence="2">Cytoplasm</location>
        <location evidence="2">Cytosol</location>
    </subcellularLocation>
    <subcellularLocation>
        <location evidence="2">Nucleus</location>
        <location evidence="2">Nucleolus</location>
    </subcellularLocation>
    <text evidence="2">Detected in the nucleus and nucleolus with no expression in the cytoplasm. However, a later study finds expression in the nucleus and cytoplasm with no expression in the nucleolus.</text>
</comment>
<evidence type="ECO:0000250" key="1">
    <source>
        <dbReference type="UniProtKB" id="D4AE48"/>
    </source>
</evidence>
<evidence type="ECO:0000250" key="2">
    <source>
        <dbReference type="UniProtKB" id="Q3TPJ7"/>
    </source>
</evidence>
<evidence type="ECO:0000255" key="3">
    <source>
        <dbReference type="PROSITE-ProRule" id="PRU00214"/>
    </source>
</evidence>
<evidence type="ECO:0000256" key="4">
    <source>
        <dbReference type="SAM" id="MobiDB-lite"/>
    </source>
</evidence>
<proteinExistence type="evidence at transcript level"/>
<dbReference type="EMBL" id="CR760184">
    <property type="protein sequence ID" value="CAJ82671.1"/>
    <property type="molecule type" value="mRNA"/>
</dbReference>
<dbReference type="EMBL" id="BC090118">
    <property type="protein sequence ID" value="AAH90118.1"/>
    <property type="molecule type" value="mRNA"/>
</dbReference>
<dbReference type="RefSeq" id="NP_001015832.1">
    <property type="nucleotide sequence ID" value="NM_001015832.1"/>
</dbReference>
<dbReference type="SMR" id="Q5EB28"/>
<dbReference type="FunCoup" id="Q5EB28">
    <property type="interactions" value="2424"/>
</dbReference>
<dbReference type="PaxDb" id="8364-ENSXETP00000007115"/>
<dbReference type="DNASU" id="549445"/>
<dbReference type="GeneID" id="549445"/>
<dbReference type="KEGG" id="xtr:549445"/>
<dbReference type="AGR" id="Xenbase:XB-GENE-1005232"/>
<dbReference type="CTD" id="90007"/>
<dbReference type="Xenbase" id="XB-GENE-1005232">
    <property type="gene designation" value="midn"/>
</dbReference>
<dbReference type="eggNOG" id="ENOG502QTDX">
    <property type="taxonomic scope" value="Eukaryota"/>
</dbReference>
<dbReference type="HOGENOM" id="CLU_029882_0_0_1"/>
<dbReference type="InParanoid" id="Q5EB28"/>
<dbReference type="OMA" id="PSHDIGQ"/>
<dbReference type="OrthoDB" id="1916003at2759"/>
<dbReference type="PhylomeDB" id="Q5EB28"/>
<dbReference type="TreeFam" id="TF329735"/>
<dbReference type="Proteomes" id="UP000008143">
    <property type="component" value="Chromosome 1"/>
</dbReference>
<dbReference type="Bgee" id="ENSXETG00000003282">
    <property type="expression patterns" value="Expressed in gastrula and 12 other cell types or tissues"/>
</dbReference>
<dbReference type="GO" id="GO:0005829">
    <property type="term" value="C:cytosol"/>
    <property type="evidence" value="ECO:0007669"/>
    <property type="project" value="UniProtKB-SubCell"/>
</dbReference>
<dbReference type="GO" id="GO:0005730">
    <property type="term" value="C:nucleolus"/>
    <property type="evidence" value="ECO:0007669"/>
    <property type="project" value="UniProtKB-SubCell"/>
</dbReference>
<dbReference type="CDD" id="cd01804">
    <property type="entry name" value="Ubl_midnolin"/>
    <property type="match status" value="1"/>
</dbReference>
<dbReference type="FunFam" id="3.10.20.90:FF:000180">
    <property type="entry name" value="midnolin isoform X1"/>
    <property type="match status" value="1"/>
</dbReference>
<dbReference type="Gene3D" id="3.10.20.90">
    <property type="entry name" value="Phosphatidylinositol 3-kinase Catalytic Subunit, Chain A, domain 1"/>
    <property type="match status" value="1"/>
</dbReference>
<dbReference type="InterPro" id="IPR039336">
    <property type="entry name" value="Midnolin"/>
</dbReference>
<dbReference type="InterPro" id="IPR000626">
    <property type="entry name" value="Ubiquitin-like_dom"/>
</dbReference>
<dbReference type="InterPro" id="IPR029071">
    <property type="entry name" value="Ubiquitin-like_domsf"/>
</dbReference>
<dbReference type="PANTHER" id="PTHR23010">
    <property type="entry name" value="MIDNOLIN"/>
    <property type="match status" value="1"/>
</dbReference>
<dbReference type="PANTHER" id="PTHR23010:SF1">
    <property type="entry name" value="MIDNOLIN"/>
    <property type="match status" value="1"/>
</dbReference>
<dbReference type="Pfam" id="PF00240">
    <property type="entry name" value="ubiquitin"/>
    <property type="match status" value="1"/>
</dbReference>
<dbReference type="SMART" id="SM00213">
    <property type="entry name" value="UBQ"/>
    <property type="match status" value="1"/>
</dbReference>
<dbReference type="SUPFAM" id="SSF54236">
    <property type="entry name" value="Ubiquitin-like"/>
    <property type="match status" value="1"/>
</dbReference>
<dbReference type="PROSITE" id="PS50053">
    <property type="entry name" value="UBIQUITIN_2"/>
    <property type="match status" value="1"/>
</dbReference>
<reference key="1">
    <citation type="submission" date="2006-10" db="EMBL/GenBank/DDBJ databases">
        <authorList>
            <consortium name="Sanger Xenopus tropicalis EST/cDNA project"/>
        </authorList>
    </citation>
    <scope>NUCLEOTIDE SEQUENCE [LARGE SCALE MRNA]</scope>
    <source>
        <tissue>Neurula</tissue>
    </source>
</reference>
<reference key="2">
    <citation type="submission" date="2005-02" db="EMBL/GenBank/DDBJ databases">
        <authorList>
            <consortium name="NIH - Xenopus Gene Collection (XGC) project"/>
        </authorList>
    </citation>
    <scope>NUCLEOTIDE SEQUENCE [LARGE SCALE MRNA]</scope>
    <source>
        <tissue>Embryo</tissue>
    </source>
</reference>
<sequence length="453" mass="49484">MEQQPSVPRSCTNVARETPMNLNIQSTTGTRYELSVPPDETVDGLKRRISQRLKVPKERLTLLHRETRLSSGKLQDLGISDGSRLTLLPSVEAGLMSQMSRPEQSVMQALESLTETQVNDFLSGRSPLTLALRVGDHMMFVQLQLAAQQSGASHLQHRHVITRGAEAGASPQYRTLHTSTSALSHLASCTPGSTPPTTLSPTASTHRDGPHSSPLTTSVFRSHGEGVAVSPCAEQVPCSSRGTEGTSSSASSRSRKPGAIIESFVNHAPGVFSGTFSGTLHPHCQDSAGRPRRDIGTILQILNDLLSATRHYQGMPPSLTTLRCHTQCASQARNPKATSPQSSEPQQTTHPVGHCQAQTRTCKPSGDRLRQTENRATRCKVERLQLLMHQKRLRRKARRDSRAPYHWMPTRKSSRTSSNSSTSSGEGSLEIDFEDSLWKPDVKAELNSEFVVA</sequence>
<organism>
    <name type="scientific">Xenopus tropicalis</name>
    <name type="common">Western clawed frog</name>
    <name type="synonym">Silurana tropicalis</name>
    <dbReference type="NCBI Taxonomy" id="8364"/>
    <lineage>
        <taxon>Eukaryota</taxon>
        <taxon>Metazoa</taxon>
        <taxon>Chordata</taxon>
        <taxon>Craniata</taxon>
        <taxon>Vertebrata</taxon>
        <taxon>Euteleostomi</taxon>
        <taxon>Amphibia</taxon>
        <taxon>Batrachia</taxon>
        <taxon>Anura</taxon>
        <taxon>Pipoidea</taxon>
        <taxon>Pipidae</taxon>
        <taxon>Xenopodinae</taxon>
        <taxon>Xenopus</taxon>
        <taxon>Silurana</taxon>
    </lineage>
</organism>